<proteinExistence type="inferred from homology"/>
<keyword id="KW-0143">Chaperone</keyword>
<keyword id="KW-0963">Cytoplasm</keyword>
<keyword id="KW-0690">Ribosome biogenesis</keyword>
<keyword id="KW-0698">rRNA processing</keyword>
<reference key="1">
    <citation type="journal article" date="2009" name="Genome Res.">
        <title>Newly introduced genomic prophage islands are critical determinants of in vivo competitiveness in the Liverpool epidemic strain of Pseudomonas aeruginosa.</title>
        <authorList>
            <person name="Winstanley C."/>
            <person name="Langille M.G.I."/>
            <person name="Fothergill J.L."/>
            <person name="Kukavica-Ibrulj I."/>
            <person name="Paradis-Bleau C."/>
            <person name="Sanschagrin F."/>
            <person name="Thomson N.R."/>
            <person name="Winsor G.L."/>
            <person name="Quail M.A."/>
            <person name="Lennard N."/>
            <person name="Bignell A."/>
            <person name="Clarke L."/>
            <person name="Seeger K."/>
            <person name="Saunders D."/>
            <person name="Harris D."/>
            <person name="Parkhill J."/>
            <person name="Hancock R.E.W."/>
            <person name="Brinkman F.S.L."/>
            <person name="Levesque R.C."/>
        </authorList>
    </citation>
    <scope>NUCLEOTIDE SEQUENCE [LARGE SCALE GENOMIC DNA]</scope>
    <source>
        <strain>LESB58</strain>
    </source>
</reference>
<sequence>MPTPADDLVVIGKIVSVYGIRGEVKVYSFTDPLDNLLDYRRWTLRRDGEIRQAELVRGRLHGKVLAAKLKGLDDREEARTFTGYEICIPRSELPSLEEGEYYWHQLEGLKVIDQGGQLLGVIDHLLETGANDVMVVKPCAGSLDDRERLLPYTGQCVLSIDLAAGEMRVDWDADF</sequence>
<dbReference type="EMBL" id="FM209186">
    <property type="protein sequence ID" value="CAW25963.1"/>
    <property type="molecule type" value="Genomic_DNA"/>
</dbReference>
<dbReference type="RefSeq" id="WP_003092640.1">
    <property type="nucleotide sequence ID" value="NC_011770.1"/>
</dbReference>
<dbReference type="SMR" id="B7UYK7"/>
<dbReference type="KEGG" id="pag:PLES_12361"/>
<dbReference type="HOGENOM" id="CLU_077636_1_0_6"/>
<dbReference type="GO" id="GO:0005737">
    <property type="term" value="C:cytoplasm"/>
    <property type="evidence" value="ECO:0007669"/>
    <property type="project" value="UniProtKB-SubCell"/>
</dbReference>
<dbReference type="GO" id="GO:0005840">
    <property type="term" value="C:ribosome"/>
    <property type="evidence" value="ECO:0007669"/>
    <property type="project" value="InterPro"/>
</dbReference>
<dbReference type="GO" id="GO:0043022">
    <property type="term" value="F:ribosome binding"/>
    <property type="evidence" value="ECO:0007669"/>
    <property type="project" value="InterPro"/>
</dbReference>
<dbReference type="GO" id="GO:0042274">
    <property type="term" value="P:ribosomal small subunit biogenesis"/>
    <property type="evidence" value="ECO:0007669"/>
    <property type="project" value="UniProtKB-UniRule"/>
</dbReference>
<dbReference type="GO" id="GO:0006364">
    <property type="term" value="P:rRNA processing"/>
    <property type="evidence" value="ECO:0007669"/>
    <property type="project" value="UniProtKB-UniRule"/>
</dbReference>
<dbReference type="Gene3D" id="2.30.30.240">
    <property type="entry name" value="PRC-barrel domain"/>
    <property type="match status" value="1"/>
</dbReference>
<dbReference type="Gene3D" id="2.40.30.60">
    <property type="entry name" value="RimM"/>
    <property type="match status" value="1"/>
</dbReference>
<dbReference type="HAMAP" id="MF_00014">
    <property type="entry name" value="Ribosome_mat_RimM"/>
    <property type="match status" value="1"/>
</dbReference>
<dbReference type="InterPro" id="IPR011033">
    <property type="entry name" value="PRC_barrel-like_sf"/>
</dbReference>
<dbReference type="InterPro" id="IPR056792">
    <property type="entry name" value="PRC_RimM"/>
</dbReference>
<dbReference type="InterPro" id="IPR011961">
    <property type="entry name" value="RimM"/>
</dbReference>
<dbReference type="InterPro" id="IPR002676">
    <property type="entry name" value="RimM_N"/>
</dbReference>
<dbReference type="InterPro" id="IPR036976">
    <property type="entry name" value="RimM_N_sf"/>
</dbReference>
<dbReference type="InterPro" id="IPR009000">
    <property type="entry name" value="Transl_B-barrel_sf"/>
</dbReference>
<dbReference type="NCBIfam" id="TIGR02273">
    <property type="entry name" value="16S_RimM"/>
    <property type="match status" value="1"/>
</dbReference>
<dbReference type="PANTHER" id="PTHR33692">
    <property type="entry name" value="RIBOSOME MATURATION FACTOR RIMM"/>
    <property type="match status" value="1"/>
</dbReference>
<dbReference type="PANTHER" id="PTHR33692:SF1">
    <property type="entry name" value="RIBOSOME MATURATION FACTOR RIMM"/>
    <property type="match status" value="1"/>
</dbReference>
<dbReference type="Pfam" id="PF24986">
    <property type="entry name" value="PRC_RimM"/>
    <property type="match status" value="1"/>
</dbReference>
<dbReference type="Pfam" id="PF01782">
    <property type="entry name" value="RimM"/>
    <property type="match status" value="1"/>
</dbReference>
<dbReference type="SUPFAM" id="SSF50346">
    <property type="entry name" value="PRC-barrel domain"/>
    <property type="match status" value="1"/>
</dbReference>
<dbReference type="SUPFAM" id="SSF50447">
    <property type="entry name" value="Translation proteins"/>
    <property type="match status" value="1"/>
</dbReference>
<name>RIMM_PSEA8</name>
<gene>
    <name evidence="1" type="primary">rimM</name>
    <name type="ordered locus">PLES_12361</name>
</gene>
<organism>
    <name type="scientific">Pseudomonas aeruginosa (strain LESB58)</name>
    <dbReference type="NCBI Taxonomy" id="557722"/>
    <lineage>
        <taxon>Bacteria</taxon>
        <taxon>Pseudomonadati</taxon>
        <taxon>Pseudomonadota</taxon>
        <taxon>Gammaproteobacteria</taxon>
        <taxon>Pseudomonadales</taxon>
        <taxon>Pseudomonadaceae</taxon>
        <taxon>Pseudomonas</taxon>
    </lineage>
</organism>
<comment type="function">
    <text evidence="1">An accessory protein needed during the final step in the assembly of 30S ribosomal subunit, possibly for assembly of the head region. Essential for efficient processing of 16S rRNA. May be needed both before and after RbfA during the maturation of 16S rRNA. It has affinity for free ribosomal 30S subunits but not for 70S ribosomes.</text>
</comment>
<comment type="subunit">
    <text evidence="1">Binds ribosomal protein uS19.</text>
</comment>
<comment type="subcellular location">
    <subcellularLocation>
        <location evidence="1">Cytoplasm</location>
    </subcellularLocation>
</comment>
<comment type="domain">
    <text evidence="1">The PRC barrel domain binds ribosomal protein uS19.</text>
</comment>
<comment type="similarity">
    <text evidence="1">Belongs to the RimM family.</text>
</comment>
<protein>
    <recommendedName>
        <fullName evidence="1">Ribosome maturation factor RimM</fullName>
    </recommendedName>
</protein>
<evidence type="ECO:0000255" key="1">
    <source>
        <dbReference type="HAMAP-Rule" id="MF_00014"/>
    </source>
</evidence>
<feature type="chain" id="PRO_1000196566" description="Ribosome maturation factor RimM">
    <location>
        <begin position="1"/>
        <end position="175"/>
    </location>
</feature>
<feature type="domain" description="PRC barrel" evidence="1">
    <location>
        <begin position="97"/>
        <end position="175"/>
    </location>
</feature>
<accession>B7UYK7</accession>